<name>CP1A2_MOUSE</name>
<organism>
    <name type="scientific">Mus musculus</name>
    <name type="common">Mouse</name>
    <dbReference type="NCBI Taxonomy" id="10090"/>
    <lineage>
        <taxon>Eukaryota</taxon>
        <taxon>Metazoa</taxon>
        <taxon>Chordata</taxon>
        <taxon>Craniata</taxon>
        <taxon>Vertebrata</taxon>
        <taxon>Euteleostomi</taxon>
        <taxon>Mammalia</taxon>
        <taxon>Eutheria</taxon>
        <taxon>Euarchontoglires</taxon>
        <taxon>Glires</taxon>
        <taxon>Rodentia</taxon>
        <taxon>Myomorpha</taxon>
        <taxon>Muroidea</taxon>
        <taxon>Muridae</taxon>
        <taxon>Murinae</taxon>
        <taxon>Mus</taxon>
        <taxon>Mus</taxon>
    </lineage>
</organism>
<reference key="1">
    <citation type="journal article" date="1984" name="J. Biol. Chem.">
        <title>The murine Ah locus. Comparison of the complete cytochrome P1-450 and P3-450 cDNA nucleotide and amino acid sequences.</title>
        <authorList>
            <person name="Kimura S."/>
            <person name="Gonzalez F.J."/>
            <person name="Nebert D.W."/>
        </authorList>
    </citation>
    <scope>NUCLEOTIDE SEQUENCE [GENOMIC DNA / MRNA] (P3)</scope>
    <source>
        <strain>C57BL/6N</strain>
    </source>
</reference>
<reference key="2">
    <citation type="journal article" date="1984" name="Nucleic Acids Res.">
        <title>Mouse cytochrome P3-450: complete cDNA and amino acid sequence.</title>
        <authorList>
            <person name="Kimura S."/>
            <person name="Gonzalez F.J."/>
            <person name="Nebert D.W."/>
        </authorList>
    </citation>
    <scope>NUCLEOTIDE SEQUENCE [GENOMIC DNA / MRNA] (P3)</scope>
    <source>
        <strain>C57BL/6N</strain>
    </source>
</reference>
<reference key="3">
    <citation type="journal article" date="1985" name="J. Biol. Chem.">
        <title>Comparison of the flanking regions and introns of the mouse 2,3,7,8-tetrachlorodibenzo-p-dioxin-inducible cytochrome P1-450 and P3-450 genes.</title>
        <authorList>
            <person name="Gonzalez F.J."/>
            <person name="Kimura S."/>
            <person name="Nebert D.W."/>
        </authorList>
    </citation>
    <scope>NUCLEOTIDE SEQUENCE [GENOMIC DNA / MRNA] (P3)</scope>
</reference>
<reference key="4">
    <citation type="journal article" date="1985" name="J. Biol. Chem.">
        <authorList>
            <person name="Gonzalez F.J."/>
            <person name="Kimura S."/>
            <person name="Nebert D.W."/>
        </authorList>
    </citation>
    <scope>ERRATUM OF PUBMED:3988744</scope>
</reference>
<reference key="5">
    <citation type="journal article" date="1984" name="Gene">
        <title>Isolation and characterization of full-length mouse cDNA and genomic clones of 3-methylcholanthrene-inducible cytochrome P1-450 and P3-450.</title>
        <authorList>
            <person name="Gonzalez F.J."/>
            <person name="McKenzie P.I."/>
            <person name="Kimura S."/>
            <person name="Nebert D.W."/>
        </authorList>
    </citation>
    <scope>NUCLEOTIDE SEQUENCE [GENOMIC DNA / MRNA] (P3)</scope>
</reference>
<reference key="6">
    <citation type="journal article" date="1986" name="Nucleic Acids Res.">
        <title>cDNA and complete amino acid sequence of mouse P2(450): allelic variant of mouse P3(450) gene.</title>
        <authorList>
            <person name="Kimura S."/>
            <person name="Nebert D.W."/>
        </authorList>
    </citation>
    <scope>NUCLEOTIDE SEQUENCE [MRNA] (P2)</scope>
    <source>
        <strain>DBA/2N</strain>
        <tissue>Liver</tissue>
    </source>
</reference>
<reference key="7">
    <citation type="journal article" date="2004" name="Genome Res.">
        <title>The status, quality, and expansion of the NIH full-length cDNA project: the Mammalian Gene Collection (MGC).</title>
        <authorList>
            <consortium name="The MGC Project Team"/>
        </authorList>
    </citation>
    <scope>NUCLEOTIDE SEQUENCE [LARGE SCALE MRNA] (P3)</scope>
    <source>
        <tissue>Liver</tissue>
    </source>
</reference>
<reference key="8">
    <citation type="journal article" date="1986" name="Biochemistry">
        <title>Amino-terminal sequence and structure of monoclonal antibody immunopurified cytochromes P-450.</title>
        <authorList>
            <person name="Cheng K.C."/>
            <person name="Park S.S."/>
            <person name="Krutzsch H.C."/>
            <person name="Grantham P.H."/>
            <person name="Gelboin H.V."/>
            <person name="Friedman F.K."/>
        </authorList>
    </citation>
    <scope>PROTEIN SEQUENCE OF 2-26</scope>
    <source>
        <strain>DBA/2J</strain>
    </source>
</reference>
<reference key="9">
    <citation type="journal article" date="1986" name="Biochem. Pharmacol.">
        <title>Methylation differences in the murine P-1-450 and P-3-450 genes in wild-type and mutant hepatoma cell culture.</title>
        <authorList>
            <person name="Peterson T.C."/>
            <person name="Gonzalez F.J."/>
            <person name="Nebert D.W."/>
        </authorList>
    </citation>
    <scope>NUCLEOTIDE SEQUENCE [MRNA] OF 277-315</scope>
</reference>
<reference key="10">
    <citation type="journal article" date="2010" name="Cell">
        <title>A tissue-specific atlas of mouse protein phosphorylation and expression.</title>
        <authorList>
            <person name="Huttlin E.L."/>
            <person name="Jedrychowski M.P."/>
            <person name="Elias J.E."/>
            <person name="Goswami T."/>
            <person name="Rad R."/>
            <person name="Beausoleil S.A."/>
            <person name="Villen J."/>
            <person name="Haas W."/>
            <person name="Sowa M.E."/>
            <person name="Gygi S.P."/>
        </authorList>
    </citation>
    <scope>IDENTIFICATION BY MASS SPECTROMETRY [LARGE SCALE ANALYSIS]</scope>
    <source>
        <tissue>Liver</tissue>
    </source>
</reference>
<comment type="function">
    <text evidence="2">A cytochrome P450 monooxygenase involved in the metabolism of various endogenous substrates, including fatty acids, steroid hormones and vitamins. Mechanistically, uses molecular oxygen inserting one oxygen atom into a substrate, and reducing the second into a water molecule, with two electrons provided by NADPH via cytochrome P450 reductase (NADPH--hemoprotein reductase). Catalyzes the hydroxylation of carbon-hydrogen bonds. Exhibits high catalytic activity for the formation of hydroxyestrogens from estrone (E1) and 17beta-estradiol (E2), namely 2-hydroxy E1 and E2. Metabolizes cholesterol toward 25-hydroxycholesterol, a physiological regulator of cellular cholesterol homeostasis. May act as a major enzyme for all-trans retinoic acid biosynthesis in the liver. Catalyzes two successive oxidative transformation of all-trans retinol to all-trans retinal and then to the active form all-trans retinoic acid. Primarily catalyzes stereoselective epoxidation of the last double bond of polyunsaturated fatty acids (PUFA), displaying a strong preference for the (R,S) stereoisomer. Catalyzes bisallylic hydroxylation and omega-1 hydroxylation of PUFA. May also participate in eicosanoids metabolism by converting hydroperoxide species into oxo metabolites (lipoxygenase-like reaction, NADPH-independent). Plays a role in the oxidative metabolism of xenobiotics. Catalyzes the N-hydroxylation of heterocyclic amines and the O-deethylation of phenacetin. Metabolizes caffeine via N3-demethylation.</text>
</comment>
<comment type="catalytic activity">
    <reaction evidence="2">
        <text>an organic molecule + reduced [NADPH--hemoprotein reductase] + O2 = an alcohol + oxidized [NADPH--hemoprotein reductase] + H2O + H(+)</text>
        <dbReference type="Rhea" id="RHEA:17149"/>
        <dbReference type="Rhea" id="RHEA-COMP:11964"/>
        <dbReference type="Rhea" id="RHEA-COMP:11965"/>
        <dbReference type="ChEBI" id="CHEBI:15377"/>
        <dbReference type="ChEBI" id="CHEBI:15378"/>
        <dbReference type="ChEBI" id="CHEBI:15379"/>
        <dbReference type="ChEBI" id="CHEBI:30879"/>
        <dbReference type="ChEBI" id="CHEBI:57618"/>
        <dbReference type="ChEBI" id="CHEBI:58210"/>
        <dbReference type="ChEBI" id="CHEBI:142491"/>
        <dbReference type="EC" id="1.14.14.1"/>
    </reaction>
    <physiologicalReaction direction="left-to-right" evidence="2">
        <dbReference type="Rhea" id="RHEA:17150"/>
    </physiologicalReaction>
</comment>
<comment type="catalytic activity">
    <reaction evidence="2">
        <text>17beta-estradiol + reduced [NADPH--hemoprotein reductase] + O2 = 2-hydroxy-17beta-estradiol + oxidized [NADPH--hemoprotein reductase] + H2O + H(+)</text>
        <dbReference type="Rhea" id="RHEA:47212"/>
        <dbReference type="Rhea" id="RHEA-COMP:11964"/>
        <dbReference type="Rhea" id="RHEA-COMP:11965"/>
        <dbReference type="ChEBI" id="CHEBI:15377"/>
        <dbReference type="ChEBI" id="CHEBI:15378"/>
        <dbReference type="ChEBI" id="CHEBI:15379"/>
        <dbReference type="ChEBI" id="CHEBI:16469"/>
        <dbReference type="ChEBI" id="CHEBI:28744"/>
        <dbReference type="ChEBI" id="CHEBI:57618"/>
        <dbReference type="ChEBI" id="CHEBI:58210"/>
    </reaction>
    <physiologicalReaction direction="left-to-right" evidence="2">
        <dbReference type="Rhea" id="RHEA:47213"/>
    </physiologicalReaction>
</comment>
<comment type="catalytic activity">
    <reaction evidence="2">
        <text>17beta-estradiol + reduced [NADPH--hemoprotein reductase] + O2 = 4-hydroxy-17beta-estradiol + oxidized [NADPH--hemoprotein reductase] + H2O + H(+)</text>
        <dbReference type="Rhea" id="RHEA:47280"/>
        <dbReference type="Rhea" id="RHEA-COMP:11964"/>
        <dbReference type="Rhea" id="RHEA-COMP:11965"/>
        <dbReference type="ChEBI" id="CHEBI:15377"/>
        <dbReference type="ChEBI" id="CHEBI:15378"/>
        <dbReference type="ChEBI" id="CHEBI:15379"/>
        <dbReference type="ChEBI" id="CHEBI:16469"/>
        <dbReference type="ChEBI" id="CHEBI:57618"/>
        <dbReference type="ChEBI" id="CHEBI:58210"/>
        <dbReference type="ChEBI" id="CHEBI:62845"/>
    </reaction>
    <physiologicalReaction direction="left-to-right" evidence="2">
        <dbReference type="Rhea" id="RHEA:47281"/>
    </physiologicalReaction>
</comment>
<comment type="catalytic activity">
    <reaction evidence="2">
        <text>estrone + reduced [NADPH--hemoprotein reductase] + O2 = 2-hydroxyestrone + oxidized [NADPH--hemoprotein reductase] + H2O + H(+)</text>
        <dbReference type="Rhea" id="RHEA:47208"/>
        <dbReference type="Rhea" id="RHEA-COMP:11964"/>
        <dbReference type="Rhea" id="RHEA-COMP:11965"/>
        <dbReference type="ChEBI" id="CHEBI:1156"/>
        <dbReference type="ChEBI" id="CHEBI:15377"/>
        <dbReference type="ChEBI" id="CHEBI:15378"/>
        <dbReference type="ChEBI" id="CHEBI:15379"/>
        <dbReference type="ChEBI" id="CHEBI:17263"/>
        <dbReference type="ChEBI" id="CHEBI:57618"/>
        <dbReference type="ChEBI" id="CHEBI:58210"/>
    </reaction>
    <physiologicalReaction direction="left-to-right" evidence="2">
        <dbReference type="Rhea" id="RHEA:47209"/>
    </physiologicalReaction>
</comment>
<comment type="catalytic activity">
    <reaction evidence="2">
        <text>estrone + reduced [NADPH--hemoprotein reductase] + O2 = 4-hydroxyestrone + oxidized [NADPH--hemoprotein reductase] + H2O + H(+)</text>
        <dbReference type="Rhea" id="RHEA:47292"/>
        <dbReference type="Rhea" id="RHEA-COMP:11964"/>
        <dbReference type="Rhea" id="RHEA-COMP:11965"/>
        <dbReference type="ChEBI" id="CHEBI:15377"/>
        <dbReference type="ChEBI" id="CHEBI:15378"/>
        <dbReference type="ChEBI" id="CHEBI:15379"/>
        <dbReference type="ChEBI" id="CHEBI:17263"/>
        <dbReference type="ChEBI" id="CHEBI:57618"/>
        <dbReference type="ChEBI" id="CHEBI:58210"/>
        <dbReference type="ChEBI" id="CHEBI:87602"/>
    </reaction>
    <physiologicalReaction direction="left-to-right" evidence="2">
        <dbReference type="Rhea" id="RHEA:47293"/>
    </physiologicalReaction>
</comment>
<comment type="catalytic activity">
    <reaction evidence="2">
        <text>cholesterol + reduced [NADPH--hemoprotein reductase] + O2 = 25-hydroxycholesterol + oxidized [NADPH--hemoprotein reductase] + H2O + H(+)</text>
        <dbReference type="Rhea" id="RHEA:50256"/>
        <dbReference type="Rhea" id="RHEA-COMP:11964"/>
        <dbReference type="Rhea" id="RHEA-COMP:11965"/>
        <dbReference type="ChEBI" id="CHEBI:15377"/>
        <dbReference type="ChEBI" id="CHEBI:15378"/>
        <dbReference type="ChEBI" id="CHEBI:15379"/>
        <dbReference type="ChEBI" id="CHEBI:16113"/>
        <dbReference type="ChEBI" id="CHEBI:42977"/>
        <dbReference type="ChEBI" id="CHEBI:57618"/>
        <dbReference type="ChEBI" id="CHEBI:58210"/>
    </reaction>
    <physiologicalReaction direction="left-to-right" evidence="2">
        <dbReference type="Rhea" id="RHEA:50257"/>
    </physiologicalReaction>
</comment>
<comment type="catalytic activity">
    <reaction evidence="2">
        <text>all-trans-retinol + reduced [NADPH--hemoprotein reductase] + O2 = all-trans-retinal + oxidized [NADPH--hemoprotein reductase] + 2 H2O + H(+)</text>
        <dbReference type="Rhea" id="RHEA:42092"/>
        <dbReference type="Rhea" id="RHEA-COMP:11964"/>
        <dbReference type="Rhea" id="RHEA-COMP:11965"/>
        <dbReference type="ChEBI" id="CHEBI:15377"/>
        <dbReference type="ChEBI" id="CHEBI:15378"/>
        <dbReference type="ChEBI" id="CHEBI:15379"/>
        <dbReference type="ChEBI" id="CHEBI:17336"/>
        <dbReference type="ChEBI" id="CHEBI:17898"/>
        <dbReference type="ChEBI" id="CHEBI:57618"/>
        <dbReference type="ChEBI" id="CHEBI:58210"/>
    </reaction>
    <physiologicalReaction direction="left-to-right" evidence="2">
        <dbReference type="Rhea" id="RHEA:42093"/>
    </physiologicalReaction>
</comment>
<comment type="catalytic activity">
    <reaction evidence="2">
        <text>all-trans-retinal + reduced [NADPH--hemoprotein reductase] + O2 = all-trans-retinoate + oxidized [NADPH--hemoprotein reductase] + H2O + 2 H(+)</text>
        <dbReference type="Rhea" id="RHEA:42088"/>
        <dbReference type="Rhea" id="RHEA-COMP:11964"/>
        <dbReference type="Rhea" id="RHEA-COMP:11965"/>
        <dbReference type="ChEBI" id="CHEBI:15377"/>
        <dbReference type="ChEBI" id="CHEBI:15378"/>
        <dbReference type="ChEBI" id="CHEBI:15379"/>
        <dbReference type="ChEBI" id="CHEBI:17898"/>
        <dbReference type="ChEBI" id="CHEBI:35291"/>
        <dbReference type="ChEBI" id="CHEBI:57618"/>
        <dbReference type="ChEBI" id="CHEBI:58210"/>
    </reaction>
    <physiologicalReaction direction="left-to-right" evidence="2">
        <dbReference type="Rhea" id="RHEA:42089"/>
    </physiologicalReaction>
</comment>
<comment type="catalytic activity">
    <reaction evidence="2">
        <text>(5Z,8Z,11Z,14Z)-eicosatetraenoate + reduced [NADPH--hemoprotein reductase] + O2 = (14R,15S)-epoxy-(5Z,8Z,11Z)-eicosatrienoate + oxidized [NADPH--hemoprotein reductase] + H2O + H(+)</text>
        <dbReference type="Rhea" id="RHEA:49860"/>
        <dbReference type="Rhea" id="RHEA-COMP:11964"/>
        <dbReference type="Rhea" id="RHEA-COMP:11965"/>
        <dbReference type="ChEBI" id="CHEBI:15377"/>
        <dbReference type="ChEBI" id="CHEBI:15378"/>
        <dbReference type="ChEBI" id="CHEBI:15379"/>
        <dbReference type="ChEBI" id="CHEBI:32395"/>
        <dbReference type="ChEBI" id="CHEBI:57618"/>
        <dbReference type="ChEBI" id="CHEBI:58210"/>
        <dbReference type="ChEBI" id="CHEBI:131965"/>
    </reaction>
    <physiologicalReaction direction="left-to-right" evidence="2">
        <dbReference type="Rhea" id="RHEA:49861"/>
    </physiologicalReaction>
</comment>
<comment type="catalytic activity">
    <reaction evidence="2">
        <text>(5Z,8Z,11Z,14Z)-eicosatetraenoate + reduced [NADPH--hemoprotein reductase] + O2 = (14S,15R)-epoxy-(5Z,8Z,11Z)-eicosatrienoate + oxidized [NADPH--hemoprotein reductase] + H2O + H(+)</text>
        <dbReference type="Rhea" id="RHEA:49856"/>
        <dbReference type="Rhea" id="RHEA-COMP:11964"/>
        <dbReference type="Rhea" id="RHEA-COMP:11965"/>
        <dbReference type="ChEBI" id="CHEBI:15377"/>
        <dbReference type="ChEBI" id="CHEBI:15378"/>
        <dbReference type="ChEBI" id="CHEBI:15379"/>
        <dbReference type="ChEBI" id="CHEBI:32395"/>
        <dbReference type="ChEBI" id="CHEBI:57618"/>
        <dbReference type="ChEBI" id="CHEBI:58210"/>
        <dbReference type="ChEBI" id="CHEBI:131964"/>
    </reaction>
    <physiologicalReaction direction="left-to-right" evidence="2">
        <dbReference type="Rhea" id="RHEA:49857"/>
    </physiologicalReaction>
</comment>
<comment type="catalytic activity">
    <reaction evidence="2">
        <text>(5Z,8Z,11Z,14Z,17Z)-eicosapentaenoate + reduced [NADPH--hemoprotein reductase] + O2 = (17R,18S)-epoxy-(5Z,8Z,11Z,14Z)-eicosatetraenoate + oxidized [NADPH--hemoprotein reductase] + H2O + H(+)</text>
        <dbReference type="Rhea" id="RHEA:39779"/>
        <dbReference type="Rhea" id="RHEA-COMP:11964"/>
        <dbReference type="Rhea" id="RHEA-COMP:11965"/>
        <dbReference type="ChEBI" id="CHEBI:15377"/>
        <dbReference type="ChEBI" id="CHEBI:15378"/>
        <dbReference type="ChEBI" id="CHEBI:15379"/>
        <dbReference type="ChEBI" id="CHEBI:57618"/>
        <dbReference type="ChEBI" id="CHEBI:58210"/>
        <dbReference type="ChEBI" id="CHEBI:58562"/>
        <dbReference type="ChEBI" id="CHEBI:76634"/>
    </reaction>
    <physiologicalReaction direction="left-to-right" evidence="2">
        <dbReference type="Rhea" id="RHEA:39780"/>
    </physiologicalReaction>
</comment>
<comment type="catalytic activity">
    <reaction evidence="2">
        <text>(4Z,7Z,10Z,13Z,16Z,19Z)-docosahexaenoate + reduced [NADPH--hemoprotein reductase] + O2 = (19R,20S)-epoxy-(4Z,7Z,10Z,13Z,16Z)-docosapentaenoate + oxidized [NADPH--hemoprotein reductase] + H2O + H(+)</text>
        <dbReference type="Rhea" id="RHEA:52120"/>
        <dbReference type="Rhea" id="RHEA-COMP:11964"/>
        <dbReference type="Rhea" id="RHEA-COMP:11965"/>
        <dbReference type="ChEBI" id="CHEBI:15377"/>
        <dbReference type="ChEBI" id="CHEBI:15378"/>
        <dbReference type="ChEBI" id="CHEBI:15379"/>
        <dbReference type="ChEBI" id="CHEBI:57618"/>
        <dbReference type="ChEBI" id="CHEBI:58210"/>
        <dbReference type="ChEBI" id="CHEBI:77016"/>
        <dbReference type="ChEBI" id="CHEBI:136410"/>
    </reaction>
    <physiologicalReaction direction="left-to-right" evidence="2">
        <dbReference type="Rhea" id="RHEA:52121"/>
    </physiologicalReaction>
</comment>
<comment type="catalytic activity">
    <reaction evidence="2">
        <text>(5S)-hydroperoxy-(6E,8Z,11Z,14Z)-eicosatetraenoate = 5-oxo-(6E,8Z,11Z,14Z)-eicosatetraenoate + H2O</text>
        <dbReference type="Rhea" id="RHEA:48632"/>
        <dbReference type="ChEBI" id="CHEBI:15377"/>
        <dbReference type="ChEBI" id="CHEBI:57450"/>
        <dbReference type="ChEBI" id="CHEBI:65342"/>
    </reaction>
    <physiologicalReaction direction="left-to-right" evidence="2">
        <dbReference type="Rhea" id="RHEA:48633"/>
    </physiologicalReaction>
</comment>
<comment type="catalytic activity">
    <reaction evidence="2">
        <text>(12S)-hydroperoxy-(5Z,8Z,10E,14Z)-eicosatetraenoate = 12-oxo-(5Z,8Z,10E,14Z)-eicosatetraenoate + H2O</text>
        <dbReference type="Rhea" id="RHEA:37947"/>
        <dbReference type="ChEBI" id="CHEBI:15377"/>
        <dbReference type="ChEBI" id="CHEBI:57444"/>
        <dbReference type="ChEBI" id="CHEBI:75231"/>
        <dbReference type="EC" id="4.2.1.152"/>
    </reaction>
    <physiologicalReaction direction="left-to-right" evidence="2">
        <dbReference type="Rhea" id="RHEA:37948"/>
    </physiologicalReaction>
</comment>
<comment type="catalytic activity">
    <reaction evidence="2">
        <text>(15S)-hydroperoxy-(5Z,8Z,11Z,13E)-eicosatetraenoate = 15-oxo-(5Z,8Z,11Z,13E)-eicosatetraenoate + H2O</text>
        <dbReference type="Rhea" id="RHEA:48636"/>
        <dbReference type="ChEBI" id="CHEBI:15377"/>
        <dbReference type="ChEBI" id="CHEBI:57410"/>
        <dbReference type="ChEBI" id="CHEBI:57446"/>
    </reaction>
    <physiologicalReaction direction="left-to-right" evidence="2">
        <dbReference type="Rhea" id="RHEA:48637"/>
    </physiologicalReaction>
</comment>
<comment type="catalytic activity">
    <reaction evidence="2">
        <text>(13S)-hydroperoxy-(9Z,11E)-octadecadienoate = 13-oxo-(9Z,11E)-octadecadienoate + H2O</text>
        <dbReference type="Rhea" id="RHEA:48716"/>
        <dbReference type="ChEBI" id="CHEBI:15377"/>
        <dbReference type="ChEBI" id="CHEBI:57466"/>
        <dbReference type="ChEBI" id="CHEBI:90781"/>
    </reaction>
    <physiologicalReaction direction="left-to-right" evidence="2">
        <dbReference type="Rhea" id="RHEA:48717"/>
    </physiologicalReaction>
</comment>
<comment type="catalytic activity">
    <reaction evidence="2">
        <text>(5Z,8Z,11Z,14Z)-eicosatetraenoate + reduced [NADPH--hemoprotein reductase] + O2 = 13-hydroxy-(5Z,8Z,11Z,14Z)-eicosatetraenoate + oxidized [NADPH--hemoprotein reductase] + H2O + H(+)</text>
        <dbReference type="Rhea" id="RHEA:52292"/>
        <dbReference type="Rhea" id="RHEA-COMP:11964"/>
        <dbReference type="Rhea" id="RHEA-COMP:11965"/>
        <dbReference type="ChEBI" id="CHEBI:15377"/>
        <dbReference type="ChEBI" id="CHEBI:15378"/>
        <dbReference type="ChEBI" id="CHEBI:15379"/>
        <dbReference type="ChEBI" id="CHEBI:32395"/>
        <dbReference type="ChEBI" id="CHEBI:57618"/>
        <dbReference type="ChEBI" id="CHEBI:58210"/>
        <dbReference type="ChEBI" id="CHEBI:136524"/>
    </reaction>
    <physiologicalReaction direction="left-to-right" evidence="2">
        <dbReference type="Rhea" id="RHEA:52293"/>
    </physiologicalReaction>
</comment>
<comment type="catalytic activity">
    <reaction evidence="2">
        <text>(5Z,8Z,11Z,14Z)-eicosatetraenoate + reduced [NADPH--hemoprotein reductase] + O2 = 19-hydroxy-(5Z,8Z,11Z,14Z)-eicosatetraenoate + oxidized [NADPH--hemoprotein reductase] + H2O + H(+)</text>
        <dbReference type="Rhea" id="RHEA:39759"/>
        <dbReference type="Rhea" id="RHEA-COMP:11964"/>
        <dbReference type="Rhea" id="RHEA-COMP:11965"/>
        <dbReference type="ChEBI" id="CHEBI:15377"/>
        <dbReference type="ChEBI" id="CHEBI:15378"/>
        <dbReference type="ChEBI" id="CHEBI:15379"/>
        <dbReference type="ChEBI" id="CHEBI:32395"/>
        <dbReference type="ChEBI" id="CHEBI:57618"/>
        <dbReference type="ChEBI" id="CHEBI:58210"/>
        <dbReference type="ChEBI" id="CHEBI:76627"/>
    </reaction>
    <physiologicalReaction direction="left-to-right" evidence="2">
        <dbReference type="Rhea" id="RHEA:39760"/>
    </physiologicalReaction>
</comment>
<comment type="catalytic activity">
    <reaction evidence="2">
        <text>(9Z,12Z)-octadecadienoate + reduced [NADPH--hemoprotein reductase] + O2 = 11-hydroxy-(9Z,12Z)-octadecadienoate + oxidized [NADPH--hemoprotein reductase] + H2O + H(+)</text>
        <dbReference type="Rhea" id="RHEA:52284"/>
        <dbReference type="Rhea" id="RHEA-COMP:11964"/>
        <dbReference type="Rhea" id="RHEA-COMP:11965"/>
        <dbReference type="ChEBI" id="CHEBI:15377"/>
        <dbReference type="ChEBI" id="CHEBI:15378"/>
        <dbReference type="ChEBI" id="CHEBI:15379"/>
        <dbReference type="ChEBI" id="CHEBI:30245"/>
        <dbReference type="ChEBI" id="CHEBI:57618"/>
        <dbReference type="ChEBI" id="CHEBI:58210"/>
        <dbReference type="ChEBI" id="CHEBI:136522"/>
    </reaction>
    <physiologicalReaction direction="left-to-right" evidence="2">
        <dbReference type="Rhea" id="RHEA:52285"/>
    </physiologicalReaction>
</comment>
<comment type="cofactor">
    <cofactor evidence="1">
        <name>heme</name>
        <dbReference type="ChEBI" id="CHEBI:30413"/>
    </cofactor>
</comment>
<comment type="pathway">
    <text evidence="2">Cofactor metabolism; retinol metabolism.</text>
</comment>
<comment type="pathway">
    <text evidence="2">Steroid metabolism; cholesterol metabolism.</text>
</comment>
<comment type="pathway">
    <text evidence="2">Lipid metabolism; arachidonate metabolism.</text>
</comment>
<comment type="subunit">
    <text evidence="2">Interacts with PGRMC1; the interaction requires PGRMC1 homodimerization.</text>
</comment>
<comment type="subcellular location">
    <subcellularLocation>
        <location evidence="2">Endoplasmic reticulum membrane</location>
        <topology evidence="2">Peripheral membrane protein</topology>
    </subcellularLocation>
    <subcellularLocation>
        <location evidence="2">Microsome membrane</location>
        <topology evidence="2">Peripheral membrane protein</topology>
    </subcellularLocation>
</comment>
<comment type="induction">
    <text>By 3-methylcholanthrene (3MC).</text>
</comment>
<comment type="similarity">
    <text evidence="4">Belongs to the cytochrome P450 family.</text>
</comment>
<evidence type="ECO:0000250" key="1"/>
<evidence type="ECO:0000250" key="2">
    <source>
        <dbReference type="UniProtKB" id="P05177"/>
    </source>
</evidence>
<evidence type="ECO:0000250" key="3">
    <source>
        <dbReference type="UniProtKB" id="P56592"/>
    </source>
</evidence>
<evidence type="ECO:0000305" key="4"/>
<gene>
    <name type="primary">Cyp1a2</name>
    <name type="synonym">Cyp1a-2</name>
</gene>
<proteinExistence type="evidence at protein level"/>
<keyword id="KW-0903">Direct protein sequencing</keyword>
<keyword id="KW-0256">Endoplasmic reticulum</keyword>
<keyword id="KW-0276">Fatty acid metabolism</keyword>
<keyword id="KW-0325">Glycoprotein</keyword>
<keyword id="KW-0349">Heme</keyword>
<keyword id="KW-0408">Iron</keyword>
<keyword id="KW-0443">Lipid metabolism</keyword>
<keyword id="KW-0456">Lyase</keyword>
<keyword id="KW-0472">Membrane</keyword>
<keyword id="KW-0479">Metal-binding</keyword>
<keyword id="KW-0492">Microsome</keyword>
<keyword id="KW-0503">Monooxygenase</keyword>
<keyword id="KW-0560">Oxidoreductase</keyword>
<keyword id="KW-1185">Reference proteome</keyword>
<keyword id="KW-0753">Steroid metabolism</keyword>
<keyword id="KW-1207">Sterol metabolism</keyword>
<accession>P00186</accession>
<accession>Q9QWJ4</accession>
<protein>
    <recommendedName>
        <fullName>Cytochrome P450 1A2</fullName>
        <ecNumber evidence="2">1.14.14.1</ecNumber>
    </recommendedName>
    <alternativeName>
        <fullName>CYPIA2</fullName>
    </alternativeName>
    <alternativeName>
        <fullName evidence="2">Cholesterol 25-hydroxylase</fullName>
    </alternativeName>
    <alternativeName>
        <fullName>Cytochrome P450-P2</fullName>
    </alternativeName>
    <alternativeName>
        <fullName>Cytochrome P450-P3</fullName>
    </alternativeName>
    <alternativeName>
        <fullName>Hydroperoxy icosatetraenoate dehydratase</fullName>
        <ecNumber evidence="2">4.2.1.152</ecNumber>
    </alternativeName>
</protein>
<feature type="initiator methionine" description="Removed" evidence="3">
    <location>
        <position position="1"/>
    </location>
</feature>
<feature type="chain" id="PRO_0000051654" description="Cytochrome P450 1A2">
    <location>
        <begin position="2"/>
        <end position="513"/>
    </location>
</feature>
<feature type="binding site" evidence="1">
    <location>
        <position position="225"/>
    </location>
    <ligand>
        <name>substrate</name>
    </ligand>
</feature>
<feature type="binding site" description="axial binding residue">
    <location>
        <position position="456"/>
    </location>
    <ligand>
        <name>heme</name>
        <dbReference type="ChEBI" id="CHEBI:30413"/>
    </ligand>
    <ligandPart>
        <name>Fe</name>
        <dbReference type="ChEBI" id="CHEBI:18248"/>
    </ligandPart>
</feature>
<feature type="glycosylation site" description="O-linked (GlcNAc) serine" evidence="1">
    <location>
        <position position="68"/>
    </location>
</feature>
<feature type="sequence variant" description="In P2.">
    <original>I</original>
    <variation>M</variation>
    <location>
        <position position="384"/>
    </location>
</feature>
<sequence length="513" mass="58184">MAFSQYISLAPELLLATAIFCLVFWMVRASRTQVPKGLKNPPGPWGLPFIGHMLTVGKNPHLSLTRLSQQYGDVLQIRIGSTPVVVLSGLNTIKQALVRQGDDFKGRPDLYSFTLITNGKSMTFNPDSGPVWAARRRLAQDALKSFSIASDPTSASSCYLEEHVSKEANHLVSKLQKAMAEVGHFEPVSQVVESVANVIGAMCFGKNFPRKSEEMLNIVNNSKDFVENVTSGNAVDFFPVLRYLPNPALKRFKTFNDNFVLFLQKTVQEHYQDFNKNSIQDITSALFKHSENYKDNGGLIPEEKIVNIVNDIFGAGFDTVTTAITWSILLLVTWPNVQRKIHEELDTVVGRDRQPRLSDRPQLPYLEAFILEIYRYTSFVPFTIPHSTTRDTSLNGFHIPKERCIYINQWQVNHDEKQWKDPFVFRPERFLTNNNSAIDKTQSEKVMLFGLGKRRCIGEIPAKWEVFLFLAILLQHLEFSVPPGVKVDLTPNYGLTMKPGTCEHVQAWPRFSK</sequence>
<dbReference type="EC" id="1.14.14.1" evidence="2"/>
<dbReference type="EC" id="4.2.1.152" evidence="2"/>
<dbReference type="EMBL" id="X01682">
    <property type="protein sequence ID" value="CAA25837.1"/>
    <property type="molecule type" value="Genomic_DNA"/>
</dbReference>
<dbReference type="EMBL" id="X00479">
    <property type="protein sequence ID" value="CAA25156.1"/>
    <property type="molecule type" value="mRNA"/>
</dbReference>
<dbReference type="EMBL" id="X04283">
    <property type="protein sequence ID" value="CAA27832.1"/>
    <property type="molecule type" value="mRNA"/>
</dbReference>
<dbReference type="EMBL" id="K02589">
    <property type="protein sequence ID" value="AAA37509.1"/>
    <property type="status" value="ALT_SEQ"/>
    <property type="molecule type" value="mRNA"/>
</dbReference>
<dbReference type="EMBL" id="M10022">
    <property type="protein sequence ID" value="AAA37508.1"/>
    <property type="molecule type" value="Genomic_DNA"/>
</dbReference>
<dbReference type="EMBL" id="BC018298">
    <property type="protein sequence ID" value="AAH18298.1"/>
    <property type="molecule type" value="mRNA"/>
</dbReference>
<dbReference type="EMBL" id="BC054827">
    <property type="protein sequence ID" value="AAH54827.1"/>
    <property type="molecule type" value="mRNA"/>
</dbReference>
<dbReference type="CCDS" id="CCDS23229.1"/>
<dbReference type="PIR" id="B92495">
    <property type="entry name" value="O4MSM3"/>
</dbReference>
<dbReference type="RefSeq" id="NP_034123.1">
    <property type="nucleotide sequence ID" value="NM_009993.3"/>
</dbReference>
<dbReference type="SMR" id="P00186"/>
<dbReference type="BioGRID" id="199002">
    <property type="interactions" value="3"/>
</dbReference>
<dbReference type="FunCoup" id="P00186">
    <property type="interactions" value="841"/>
</dbReference>
<dbReference type="STRING" id="10090.ENSMUSP00000034860"/>
<dbReference type="BindingDB" id="P00186"/>
<dbReference type="ChEMBL" id="CHEMBL1671611"/>
<dbReference type="GlyCosmos" id="P00186">
    <property type="glycosylation" value="1 site, No reported glycans"/>
</dbReference>
<dbReference type="GlyGen" id="P00186">
    <property type="glycosylation" value="1 site"/>
</dbReference>
<dbReference type="iPTMnet" id="P00186"/>
<dbReference type="PhosphoSitePlus" id="P00186"/>
<dbReference type="SwissPalm" id="P00186"/>
<dbReference type="jPOST" id="P00186"/>
<dbReference type="PaxDb" id="10090-ENSMUSP00000034860"/>
<dbReference type="ProteomicsDB" id="285257"/>
<dbReference type="Antibodypedia" id="4221">
    <property type="antibodies" value="777 antibodies from 37 providers"/>
</dbReference>
<dbReference type="DNASU" id="13077"/>
<dbReference type="Ensembl" id="ENSMUST00000034860.5">
    <property type="protein sequence ID" value="ENSMUSP00000034860.4"/>
    <property type="gene ID" value="ENSMUSG00000032310.5"/>
</dbReference>
<dbReference type="GeneID" id="13077"/>
<dbReference type="KEGG" id="mmu:13077"/>
<dbReference type="UCSC" id="uc009pvm.1">
    <property type="organism name" value="mouse"/>
</dbReference>
<dbReference type="AGR" id="MGI:88589"/>
<dbReference type="CTD" id="1544"/>
<dbReference type="MGI" id="MGI:88589">
    <property type="gene designation" value="Cyp1a2"/>
</dbReference>
<dbReference type="VEuPathDB" id="HostDB:ENSMUSG00000032310"/>
<dbReference type="eggNOG" id="KOG0156">
    <property type="taxonomic scope" value="Eukaryota"/>
</dbReference>
<dbReference type="GeneTree" id="ENSGT00950000183037"/>
<dbReference type="HOGENOM" id="CLU_001570_22_0_1"/>
<dbReference type="InParanoid" id="P00186"/>
<dbReference type="OMA" id="AKWEIFL"/>
<dbReference type="OrthoDB" id="1055148at2759"/>
<dbReference type="PhylomeDB" id="P00186"/>
<dbReference type="TreeFam" id="TF105095"/>
<dbReference type="Reactome" id="R-MMU-156581">
    <property type="pathway name" value="Methylation"/>
</dbReference>
<dbReference type="Reactome" id="R-MMU-211957">
    <property type="pathway name" value="Aromatic amines can be N-hydroxylated or N-dealkylated by CYP1A2"/>
</dbReference>
<dbReference type="Reactome" id="R-MMU-2142670">
    <property type="pathway name" value="Synthesis of epoxy (EET) and dihydroxyeicosatrienoic acids (DHET)"/>
</dbReference>
<dbReference type="Reactome" id="R-MMU-2142816">
    <property type="pathway name" value="Synthesis of (16-20)-hydroxyeicosatetraenoic acids (HETE)"/>
</dbReference>
<dbReference type="Reactome" id="R-MMU-5423646">
    <property type="pathway name" value="Aflatoxin activation and detoxification"/>
</dbReference>
<dbReference type="Reactome" id="R-MMU-9018681">
    <property type="pathway name" value="Biosynthesis of protectins"/>
</dbReference>
<dbReference type="Reactome" id="R-MMU-9027307">
    <property type="pathway name" value="Biosynthesis of maresin-like SPMs"/>
</dbReference>
<dbReference type="UniPathway" id="UPA00296"/>
<dbReference type="UniPathway" id="UPA00383"/>
<dbReference type="UniPathway" id="UPA00912"/>
<dbReference type="BioGRID-ORCS" id="13077">
    <property type="hits" value="1 hit in 79 CRISPR screens"/>
</dbReference>
<dbReference type="PRO" id="PR:P00186"/>
<dbReference type="Proteomes" id="UP000000589">
    <property type="component" value="Chromosome 9"/>
</dbReference>
<dbReference type="RNAct" id="P00186">
    <property type="molecule type" value="protein"/>
</dbReference>
<dbReference type="Bgee" id="ENSMUSG00000032310">
    <property type="expression patterns" value="Expressed in left lobe of liver and 21 other cell types or tissues"/>
</dbReference>
<dbReference type="ExpressionAtlas" id="P00186">
    <property type="expression patterns" value="baseline and differential"/>
</dbReference>
<dbReference type="GO" id="GO:0005789">
    <property type="term" value="C:endoplasmic reticulum membrane"/>
    <property type="evidence" value="ECO:0007669"/>
    <property type="project" value="UniProtKB-SubCell"/>
</dbReference>
<dbReference type="GO" id="GO:0034875">
    <property type="term" value="F:caffeine oxidase activity"/>
    <property type="evidence" value="ECO:0007669"/>
    <property type="project" value="Ensembl"/>
</dbReference>
<dbReference type="GO" id="GO:0032451">
    <property type="term" value="F:demethylase activity"/>
    <property type="evidence" value="ECO:0007669"/>
    <property type="project" value="Ensembl"/>
</dbReference>
<dbReference type="GO" id="GO:0019899">
    <property type="term" value="F:enzyme binding"/>
    <property type="evidence" value="ECO:0007669"/>
    <property type="project" value="Ensembl"/>
</dbReference>
<dbReference type="GO" id="GO:0101020">
    <property type="term" value="F:estrogen 16-alpha-hydroxylase activity"/>
    <property type="evidence" value="ECO:0000250"/>
    <property type="project" value="UniProtKB"/>
</dbReference>
<dbReference type="GO" id="GO:0101021">
    <property type="term" value="F:estrogen 2-hydroxylase activity"/>
    <property type="evidence" value="ECO:0000250"/>
    <property type="project" value="UniProtKB"/>
</dbReference>
<dbReference type="GO" id="GO:0020037">
    <property type="term" value="F:heme binding"/>
    <property type="evidence" value="ECO:0000250"/>
    <property type="project" value="UniProtKB"/>
</dbReference>
<dbReference type="GO" id="GO:0106256">
    <property type="term" value="F:hydroperoxy icosatetraenoate dehydratase activity"/>
    <property type="evidence" value="ECO:0007669"/>
    <property type="project" value="UniProtKB-EC"/>
</dbReference>
<dbReference type="GO" id="GO:0005506">
    <property type="term" value="F:iron ion binding"/>
    <property type="evidence" value="ECO:0007669"/>
    <property type="project" value="InterPro"/>
</dbReference>
<dbReference type="GO" id="GO:0016712">
    <property type="term" value="F:oxidoreductase activity, acting on paired donors, with incorporation or reduction of molecular oxygen, reduced flavin or flavoprotein as one donor, and incorporation of one atom of oxygen"/>
    <property type="evidence" value="ECO:0000314"/>
    <property type="project" value="MGI"/>
</dbReference>
<dbReference type="GO" id="GO:0009820">
    <property type="term" value="P:alkaloid metabolic process"/>
    <property type="evidence" value="ECO:0007669"/>
    <property type="project" value="Ensembl"/>
</dbReference>
<dbReference type="GO" id="GO:0019369">
    <property type="term" value="P:arachidonate metabolic process"/>
    <property type="evidence" value="ECO:0007669"/>
    <property type="project" value="UniProtKB-UniPathway"/>
</dbReference>
<dbReference type="GO" id="GO:0045333">
    <property type="term" value="P:cellular respiration"/>
    <property type="evidence" value="ECO:0000315"/>
    <property type="project" value="MGI"/>
</dbReference>
<dbReference type="GO" id="GO:0071276">
    <property type="term" value="P:cellular response to cadmium ion"/>
    <property type="evidence" value="ECO:0000314"/>
    <property type="project" value="MGI"/>
</dbReference>
<dbReference type="GO" id="GO:0008203">
    <property type="term" value="P:cholesterol metabolic process"/>
    <property type="evidence" value="ECO:0007669"/>
    <property type="project" value="UniProtKB-UniPathway"/>
</dbReference>
<dbReference type="GO" id="GO:0018894">
    <property type="term" value="P:dibenzo-p-dioxin metabolic process"/>
    <property type="evidence" value="ECO:0000315"/>
    <property type="project" value="MGI"/>
</dbReference>
<dbReference type="GO" id="GO:0008210">
    <property type="term" value="P:estrogen metabolic process"/>
    <property type="evidence" value="ECO:0000250"/>
    <property type="project" value="UniProtKB"/>
</dbReference>
<dbReference type="GO" id="GO:0050665">
    <property type="term" value="P:hydrogen peroxide biosynthetic process"/>
    <property type="evidence" value="ECO:0000315"/>
    <property type="project" value="MGI"/>
</dbReference>
<dbReference type="GO" id="GO:0030324">
    <property type="term" value="P:lung development"/>
    <property type="evidence" value="ECO:0000315"/>
    <property type="project" value="MGI"/>
</dbReference>
<dbReference type="GO" id="GO:0016098">
    <property type="term" value="P:monoterpenoid metabolic process"/>
    <property type="evidence" value="ECO:0007669"/>
    <property type="project" value="Ensembl"/>
</dbReference>
<dbReference type="GO" id="GO:0070989">
    <property type="term" value="P:oxidative demethylation"/>
    <property type="evidence" value="ECO:0007669"/>
    <property type="project" value="Ensembl"/>
</dbReference>
<dbReference type="GO" id="GO:0006778">
    <property type="term" value="P:porphyrin-containing compound metabolic process"/>
    <property type="evidence" value="ECO:0000315"/>
    <property type="project" value="MGI"/>
</dbReference>
<dbReference type="GO" id="GO:0009791">
    <property type="term" value="P:post-embryonic development"/>
    <property type="evidence" value="ECO:0000315"/>
    <property type="project" value="MGI"/>
</dbReference>
<dbReference type="GO" id="GO:0010468">
    <property type="term" value="P:regulation of gene expression"/>
    <property type="evidence" value="ECO:0000315"/>
    <property type="project" value="MGI"/>
</dbReference>
<dbReference type="GO" id="GO:0042572">
    <property type="term" value="P:retinol metabolic process"/>
    <property type="evidence" value="ECO:0000250"/>
    <property type="project" value="UniProtKB"/>
</dbReference>
<dbReference type="GO" id="GO:0006706">
    <property type="term" value="P:steroid catabolic process"/>
    <property type="evidence" value="ECO:0007669"/>
    <property type="project" value="Ensembl"/>
</dbReference>
<dbReference type="GO" id="GO:0009403">
    <property type="term" value="P:toxin biosynthetic process"/>
    <property type="evidence" value="ECO:0007669"/>
    <property type="project" value="Ensembl"/>
</dbReference>
<dbReference type="GO" id="GO:0009404">
    <property type="term" value="P:toxin metabolic process"/>
    <property type="evidence" value="ECO:0000315"/>
    <property type="project" value="MGI"/>
</dbReference>
<dbReference type="GO" id="GO:0042178">
    <property type="term" value="P:xenobiotic catabolic process"/>
    <property type="evidence" value="ECO:0007669"/>
    <property type="project" value="Ensembl"/>
</dbReference>
<dbReference type="GO" id="GO:0006805">
    <property type="term" value="P:xenobiotic metabolic process"/>
    <property type="evidence" value="ECO:0000315"/>
    <property type="project" value="MGI"/>
</dbReference>
<dbReference type="CDD" id="cd20676">
    <property type="entry name" value="CYP1A"/>
    <property type="match status" value="1"/>
</dbReference>
<dbReference type="FunFam" id="1.10.630.10:FF:000002">
    <property type="entry name" value="Cytochrome P450 1A1"/>
    <property type="match status" value="1"/>
</dbReference>
<dbReference type="Gene3D" id="1.10.630.10">
    <property type="entry name" value="Cytochrome P450"/>
    <property type="match status" value="1"/>
</dbReference>
<dbReference type="InterPro" id="IPR001128">
    <property type="entry name" value="Cyt_P450"/>
</dbReference>
<dbReference type="InterPro" id="IPR017972">
    <property type="entry name" value="Cyt_P450_CS"/>
</dbReference>
<dbReference type="InterPro" id="IPR002401">
    <property type="entry name" value="Cyt_P450_E_grp-I"/>
</dbReference>
<dbReference type="InterPro" id="IPR008066">
    <property type="entry name" value="Cyt_P450_E_grp-I_CYP1"/>
</dbReference>
<dbReference type="InterPro" id="IPR036396">
    <property type="entry name" value="Cyt_P450_sf"/>
</dbReference>
<dbReference type="PANTHER" id="PTHR24289:SF21">
    <property type="entry name" value="CYTOCHROME P450 1A"/>
    <property type="match status" value="1"/>
</dbReference>
<dbReference type="PANTHER" id="PTHR24289">
    <property type="entry name" value="STEROID 17-ALPHA-HYDROXYLASE/17,20 LYASE"/>
    <property type="match status" value="1"/>
</dbReference>
<dbReference type="Pfam" id="PF00067">
    <property type="entry name" value="p450"/>
    <property type="match status" value="1"/>
</dbReference>
<dbReference type="PRINTS" id="PR00463">
    <property type="entry name" value="EP450I"/>
</dbReference>
<dbReference type="PRINTS" id="PR01683">
    <property type="entry name" value="EP450ICYP1A"/>
</dbReference>
<dbReference type="PRINTS" id="PR00385">
    <property type="entry name" value="P450"/>
</dbReference>
<dbReference type="SUPFAM" id="SSF48264">
    <property type="entry name" value="Cytochrome P450"/>
    <property type="match status" value="1"/>
</dbReference>
<dbReference type="PROSITE" id="PS00086">
    <property type="entry name" value="CYTOCHROME_P450"/>
    <property type="match status" value="1"/>
</dbReference>